<name>KI104_MEDTR</name>
<feature type="signal peptide" evidence="1">
    <location>
        <begin position="1"/>
        <end position="24"/>
    </location>
</feature>
<feature type="chain" id="PRO_5014498701" description="Kunitz type trypsin inhibitor 104">
    <location>
        <begin position="25"/>
        <end position="201"/>
    </location>
</feature>
<feature type="site" description="Important in determining the strength and specificity of the interaction with its subsrate" evidence="3">
    <location>
        <position position="170"/>
    </location>
</feature>
<feature type="disulfide bond" evidence="6">
    <location>
        <begin position="63"/>
        <end position="110"/>
    </location>
</feature>
<feature type="disulfide bond" evidence="6">
    <location>
        <begin position="161"/>
        <end position="173"/>
    </location>
</feature>
<feature type="disulfide bond" evidence="6">
    <location>
        <begin position="166"/>
        <end position="169"/>
    </location>
</feature>
<feature type="mutagenesis site" description="Enables interaction with SCP1." evidence="3">
    <original>K</original>
    <variation>E</variation>
    <location>
        <position position="170"/>
    </location>
</feature>
<dbReference type="EMBL" id="KL402825">
    <property type="protein sequence ID" value="KEH16752.1"/>
    <property type="molecule type" value="Genomic_DNA"/>
</dbReference>
<dbReference type="EMBL" id="PSQE01000001">
    <property type="protein sequence ID" value="RHN79110.1"/>
    <property type="molecule type" value="Genomic_DNA"/>
</dbReference>
<dbReference type="EMBL" id="AJ500250">
    <property type="status" value="NOT_ANNOTATED_CDS"/>
    <property type="molecule type" value="mRNA"/>
</dbReference>
<dbReference type="RefSeq" id="XP_013442727.1">
    <property type="nucleotide sequence ID" value="XM_013587273.1"/>
</dbReference>
<dbReference type="SMR" id="A0A072TH68"/>
<dbReference type="STRING" id="3880.A0A072TH68"/>
<dbReference type="MEROPS" id="I03.029"/>
<dbReference type="EnsemblPlants" id="rna2823">
    <property type="protein sequence ID" value="RHN79110.1"/>
    <property type="gene ID" value="gene2823"/>
</dbReference>
<dbReference type="GeneID" id="25480281"/>
<dbReference type="Gramene" id="rna2823">
    <property type="protein sequence ID" value="RHN79110.1"/>
    <property type="gene ID" value="gene2823"/>
</dbReference>
<dbReference type="KEGG" id="mtr:25480281"/>
<dbReference type="HOGENOM" id="CLU_090145_3_0_1"/>
<dbReference type="OrthoDB" id="1918435at2759"/>
<dbReference type="Proteomes" id="UP000002051">
    <property type="component" value="Unassembled WGS sequence"/>
</dbReference>
<dbReference type="Proteomes" id="UP000265566">
    <property type="component" value="Chromosome 1"/>
</dbReference>
<dbReference type="GO" id="GO:0048046">
    <property type="term" value="C:apoplast"/>
    <property type="evidence" value="ECO:0000314"/>
    <property type="project" value="UniProtKB"/>
</dbReference>
<dbReference type="GO" id="GO:0005615">
    <property type="term" value="C:extracellular space"/>
    <property type="evidence" value="ECO:0000314"/>
    <property type="project" value="UniProtKB"/>
</dbReference>
<dbReference type="GO" id="GO:0004867">
    <property type="term" value="F:serine-type endopeptidase inhibitor activity"/>
    <property type="evidence" value="ECO:0007669"/>
    <property type="project" value="UniProtKB-KW"/>
</dbReference>
<dbReference type="GO" id="GO:0036377">
    <property type="term" value="P:arbuscular mycorrhizal association"/>
    <property type="evidence" value="ECO:0000315"/>
    <property type="project" value="UniProtKB"/>
</dbReference>
<dbReference type="GO" id="GO:0009610">
    <property type="term" value="P:response to symbiotic fungus"/>
    <property type="evidence" value="ECO:0000270"/>
    <property type="project" value="UniProtKB"/>
</dbReference>
<dbReference type="CDD" id="cd23367">
    <property type="entry name" value="beta-trefoil_STI_KPI104-like"/>
    <property type="match status" value="1"/>
</dbReference>
<dbReference type="Gene3D" id="2.80.10.50">
    <property type="match status" value="1"/>
</dbReference>
<dbReference type="InterPro" id="IPR011065">
    <property type="entry name" value="Kunitz_inhibitor_STI-like_sf"/>
</dbReference>
<dbReference type="InterPro" id="IPR002160">
    <property type="entry name" value="Prot_inh_Kunz-lg"/>
</dbReference>
<dbReference type="PANTHER" id="PTHR33107">
    <property type="entry name" value="KUNITZ TRYPSIN INHIBITOR 2"/>
    <property type="match status" value="1"/>
</dbReference>
<dbReference type="PANTHER" id="PTHR33107:SF31">
    <property type="entry name" value="KUNITZ TYPE TRYPSIN INHIBITOR 104"/>
    <property type="match status" value="1"/>
</dbReference>
<dbReference type="Pfam" id="PF00197">
    <property type="entry name" value="Kunitz_legume"/>
    <property type="match status" value="1"/>
</dbReference>
<dbReference type="PRINTS" id="PR00291">
    <property type="entry name" value="KUNITZINHBTR"/>
</dbReference>
<dbReference type="SMART" id="SM00452">
    <property type="entry name" value="STI"/>
    <property type="match status" value="1"/>
</dbReference>
<dbReference type="SUPFAM" id="SSF50386">
    <property type="entry name" value="STI-like"/>
    <property type="match status" value="1"/>
</dbReference>
<comment type="function">
    <text evidence="3">Protease inhibitor involved in the control of mycorrhiza establishment and arbuscule development during root colonization by arbuscular mycorrhizal (AM) fungi (e.g. Rhizophagus irregularis).</text>
</comment>
<comment type="subunit">
    <text evidence="3">Interacts with CP.</text>
</comment>
<comment type="subcellular location">
    <subcellularLocation>
        <location evidence="3">Secreted</location>
    </subcellularLocation>
    <subcellularLocation>
        <location evidence="3">Secreted</location>
        <location evidence="3">Extracellular space</location>
        <location evidence="3">Apoplast</location>
    </subcellularLocation>
</comment>
<comment type="induction">
    <text evidence="2 3">Accumulates in roots during colonization by arbuscular mycorrhizal (AM) fungi (e.g. Rhizophagus irregularis and Glomus intraradices).</text>
</comment>
<comment type="similarity">
    <text evidence="5">Belongs to the protease inhibitor I3 (leguminous Kunitz-type inhibitor) family.</text>
</comment>
<reference key="1">
    <citation type="journal article" date="2011" name="Nature">
        <title>The Medicago genome provides insight into the evolution of rhizobial symbioses.</title>
        <authorList>
            <person name="Young N.D."/>
            <person name="Debelle F."/>
            <person name="Oldroyd G.E.D."/>
            <person name="Geurts R."/>
            <person name="Cannon S.B."/>
            <person name="Udvardi M.K."/>
            <person name="Benedito V.A."/>
            <person name="Mayer K.F.X."/>
            <person name="Gouzy J."/>
            <person name="Schoof H."/>
            <person name="Van de Peer Y."/>
            <person name="Proost S."/>
            <person name="Cook D.R."/>
            <person name="Meyers B.C."/>
            <person name="Spannagl M."/>
            <person name="Cheung F."/>
            <person name="De Mita S."/>
            <person name="Krishnakumar V."/>
            <person name="Gundlach H."/>
            <person name="Zhou S."/>
            <person name="Mudge J."/>
            <person name="Bharti A.K."/>
            <person name="Murray J.D."/>
            <person name="Naoumkina M.A."/>
            <person name="Rosen B."/>
            <person name="Silverstein K.A.T."/>
            <person name="Tang H."/>
            <person name="Rombauts S."/>
            <person name="Zhao P.X."/>
            <person name="Zhou P."/>
            <person name="Barbe V."/>
            <person name="Bardou P."/>
            <person name="Bechner M."/>
            <person name="Bellec A."/>
            <person name="Berger A."/>
            <person name="Berges H."/>
            <person name="Bidwell S."/>
            <person name="Bisseling T."/>
            <person name="Choisne N."/>
            <person name="Couloux A."/>
            <person name="Denny R."/>
            <person name="Deshpande S."/>
            <person name="Dai X."/>
            <person name="Doyle J.J."/>
            <person name="Dudez A.-M."/>
            <person name="Farmer A.D."/>
            <person name="Fouteau S."/>
            <person name="Franken C."/>
            <person name="Gibelin C."/>
            <person name="Gish J."/>
            <person name="Goldstein S."/>
            <person name="Gonzalez A.J."/>
            <person name="Green P.J."/>
            <person name="Hallab A."/>
            <person name="Hartog M."/>
            <person name="Hua A."/>
            <person name="Humphray S.J."/>
            <person name="Jeong D.-H."/>
            <person name="Jing Y."/>
            <person name="Jocker A."/>
            <person name="Kenton S.M."/>
            <person name="Kim D.-J."/>
            <person name="Klee K."/>
            <person name="Lai H."/>
            <person name="Lang C."/>
            <person name="Lin S."/>
            <person name="Macmil S.L."/>
            <person name="Magdelenat G."/>
            <person name="Matthews L."/>
            <person name="McCorrison J."/>
            <person name="Monaghan E.L."/>
            <person name="Mun J.-H."/>
            <person name="Najar F.Z."/>
            <person name="Nicholson C."/>
            <person name="Noirot C."/>
            <person name="O'Bleness M."/>
            <person name="Paule C.R."/>
            <person name="Poulain J."/>
            <person name="Prion F."/>
            <person name="Qin B."/>
            <person name="Qu C."/>
            <person name="Retzel E.F."/>
            <person name="Riddle C."/>
            <person name="Sallet E."/>
            <person name="Samain S."/>
            <person name="Samson N."/>
            <person name="Sanders I."/>
            <person name="Saurat O."/>
            <person name="Scarpelli C."/>
            <person name="Schiex T."/>
            <person name="Segurens B."/>
            <person name="Severin A.J."/>
            <person name="Sherrier D.J."/>
            <person name="Shi R."/>
            <person name="Sims S."/>
            <person name="Singer S.R."/>
            <person name="Sinharoy S."/>
            <person name="Sterck L."/>
            <person name="Viollet A."/>
            <person name="Wang B.-B."/>
            <person name="Wang K."/>
            <person name="Wang M."/>
            <person name="Wang X."/>
            <person name="Warfsmann J."/>
            <person name="Weissenbach J."/>
            <person name="White D.D."/>
            <person name="White J.D."/>
            <person name="Wiley G.B."/>
            <person name="Wincker P."/>
            <person name="Xing Y."/>
            <person name="Yang L."/>
            <person name="Yao Z."/>
            <person name="Ying F."/>
            <person name="Zhai J."/>
            <person name="Zhou L."/>
            <person name="Zuber A."/>
            <person name="Denarie J."/>
            <person name="Dixon R.A."/>
            <person name="May G.D."/>
            <person name="Schwartz D.C."/>
            <person name="Rogers J."/>
            <person name="Quetier F."/>
            <person name="Town C.D."/>
            <person name="Roe B.A."/>
        </authorList>
    </citation>
    <scope>NUCLEOTIDE SEQUENCE [LARGE SCALE GENOMIC DNA]</scope>
    <source>
        <strain>cv. Jemalong A17</strain>
    </source>
</reference>
<reference key="2">
    <citation type="journal article" date="2014" name="BMC Genomics">
        <title>An improved genome release (version Mt4.0) for the model legume Medicago truncatula.</title>
        <authorList>
            <person name="Tang H."/>
            <person name="Krishnakumar V."/>
            <person name="Bidwell S."/>
            <person name="Rosen B."/>
            <person name="Chan A."/>
            <person name="Zhou S."/>
            <person name="Gentzbittel L."/>
            <person name="Childs K.L."/>
            <person name="Yandell M."/>
            <person name="Gundlach H."/>
            <person name="Mayer K.F."/>
            <person name="Schwartz D.C."/>
            <person name="Town C.D."/>
        </authorList>
    </citation>
    <scope>GENOME REANNOTATION</scope>
    <source>
        <strain>cv. Jemalong A17</strain>
    </source>
</reference>
<reference key="3">
    <citation type="journal article" date="2018" name="Nat. Plants">
        <title>Whole-genome landscape of Medicago truncatula symbiotic genes.</title>
        <authorList>
            <person name="Pecrix Y."/>
            <person name="Staton S.E."/>
            <person name="Sallet E."/>
            <person name="Lelandais-Briere C."/>
            <person name="Moreau S."/>
            <person name="Carrere S."/>
            <person name="Blein T."/>
            <person name="Jardinaud M.F."/>
            <person name="Latrasse D."/>
            <person name="Zouine M."/>
            <person name="Zahm M."/>
            <person name="Kreplak J."/>
            <person name="Mayjonade B."/>
            <person name="Satge C."/>
            <person name="Perez M."/>
            <person name="Cauet S."/>
            <person name="Marande W."/>
            <person name="Chantry-Darmon C."/>
            <person name="Lopez-Roques C."/>
            <person name="Bouchez O."/>
            <person name="Berard A."/>
            <person name="Debelle F."/>
            <person name="Munos S."/>
            <person name="Bendahmane A."/>
            <person name="Berges H."/>
            <person name="Niebel A."/>
            <person name="Buitink J."/>
            <person name="Frugier F."/>
            <person name="Benhamed M."/>
            <person name="Crespi M."/>
            <person name="Gouzy J."/>
            <person name="Gamas P."/>
        </authorList>
    </citation>
    <scope>NUCLEOTIDE SEQUENCE [LARGE SCALE GENOMIC DNA]</scope>
    <source>
        <strain>cv. Jemalong A17</strain>
    </source>
</reference>
<reference key="4">
    <citation type="journal article" date="2003" name="Mol. Plant Microbe Interact.">
        <title>Transcriptional changes in response to arbuscular mycorrhiza development in the model plant Medicago truncatula.</title>
        <authorList>
            <person name="Wulf A."/>
            <person name="Manthey K."/>
            <person name="Doll J."/>
            <person name="Perlick A.M."/>
            <person name="Linke B."/>
            <person name="Bekel T."/>
            <person name="Meyer F."/>
            <person name="Franken P."/>
            <person name="Kuester H."/>
            <person name="Krajinski F."/>
        </authorList>
    </citation>
    <scope>NUCLEOTIDE SEQUENCE [MRNA] OF 1-155</scope>
    <scope>INDUCTION BY ARBUSCULAR MYCORRHIZAL FUNGI</scope>
    <source>
        <strain>cv. Jemalong A17</strain>
    </source>
</reference>
<reference key="5">
    <citation type="journal article" date="2013" name="Plant J.">
        <title>A tandem Kunitz protease inhibitor (KPI106)-serine carboxypeptidase (SCP1) controls mycorrhiza establishment and arbuscule development in Medicago truncatula.</title>
        <authorList>
            <person name="Rech S.S."/>
            <person name="Heidt S."/>
            <person name="Requena N."/>
        </authorList>
    </citation>
    <scope>FUNCTION</scope>
    <scope>MUTAGENESIS OF LYS-170</scope>
    <scope>INDUCTION BY ARBUSCULAR MYCORRHIZAL FUNGI</scope>
    <scope>INTERACTION WITH CP</scope>
    <scope>DISULFIDE BOND</scope>
    <scope>GENE FAMILY</scope>
    <scope>NOMENCLATURE</scope>
</reference>
<keyword id="KW-0052">Apoplast</keyword>
<keyword id="KW-1015">Disulfide bond</keyword>
<keyword id="KW-0646">Protease inhibitor</keyword>
<keyword id="KW-1185">Reference proteome</keyword>
<keyword id="KW-0964">Secreted</keyword>
<keyword id="KW-0722">Serine protease inhibitor</keyword>
<keyword id="KW-0732">Signal</keyword>
<accession>A0A072TH68</accession>
<proteinExistence type="evidence at protein level"/>
<sequence length="201" mass="21624">MSTRSLTIFILAHVWLLMATTSIAQFVIDTSGEPVEDDEEYFIRPAITGNGGGSTLVTGNGPCPLHVGLDNTEGTLGVAVKFTPFAPQHDDDDVRLNRDLRVTFLTSTSCGQSTDWRLGEKDATSGRRLIVTGRDNGAGSQGNFFRIVQTQTGGTYNIQWCPTEACPSCKVQCGTVGVIRENGKNLLALDGDALPVVFQKE</sequence>
<evidence type="ECO:0000255" key="1"/>
<evidence type="ECO:0000269" key="2">
    <source>
    </source>
</evidence>
<evidence type="ECO:0000269" key="3">
    <source>
    </source>
</evidence>
<evidence type="ECO:0000303" key="4">
    <source>
    </source>
</evidence>
<evidence type="ECO:0000305" key="5"/>
<evidence type="ECO:0000305" key="6">
    <source>
    </source>
</evidence>
<evidence type="ECO:0000312" key="7">
    <source>
        <dbReference type="EMBL" id="KEH16752.1"/>
    </source>
</evidence>
<evidence type="ECO:0000312" key="8">
    <source>
        <dbReference type="EMBL" id="RHN79110.1"/>
    </source>
</evidence>
<protein>
    <recommendedName>
        <fullName evidence="4">Kunitz type trypsin inhibitor 104</fullName>
    </recommendedName>
</protein>
<organism>
    <name type="scientific">Medicago truncatula</name>
    <name type="common">Barrel medic</name>
    <name type="synonym">Medicago tribuloides</name>
    <dbReference type="NCBI Taxonomy" id="3880"/>
    <lineage>
        <taxon>Eukaryota</taxon>
        <taxon>Viridiplantae</taxon>
        <taxon>Streptophyta</taxon>
        <taxon>Embryophyta</taxon>
        <taxon>Tracheophyta</taxon>
        <taxon>Spermatophyta</taxon>
        <taxon>Magnoliopsida</taxon>
        <taxon>eudicotyledons</taxon>
        <taxon>Gunneridae</taxon>
        <taxon>Pentapetalae</taxon>
        <taxon>rosids</taxon>
        <taxon>fabids</taxon>
        <taxon>Fabales</taxon>
        <taxon>Fabaceae</taxon>
        <taxon>Papilionoideae</taxon>
        <taxon>50 kb inversion clade</taxon>
        <taxon>NPAAA clade</taxon>
        <taxon>Hologalegina</taxon>
        <taxon>IRL clade</taxon>
        <taxon>Trifolieae</taxon>
        <taxon>Medicago</taxon>
    </lineage>
</organism>
<gene>
    <name evidence="4" type="primary">KPI104</name>
    <name evidence="7" type="ORF">MTR_0100s0150</name>
    <name evidence="8" type="ORF">MtrunA17_Chr1g0173431</name>
</gene>